<dbReference type="EC" id="3.5.4.-"/>
<dbReference type="EMBL" id="AE000520">
    <property type="protein sequence ID" value="AAC65039.1"/>
    <property type="molecule type" value="Genomic_DNA"/>
</dbReference>
<dbReference type="EMBL" id="CP004010">
    <property type="protein sequence ID" value="AGN75265.1"/>
    <property type="molecule type" value="Genomic_DNA"/>
</dbReference>
<dbReference type="PIR" id="D71374">
    <property type="entry name" value="D71374"/>
</dbReference>
<dbReference type="RefSeq" id="WP_010881494.1">
    <property type="nucleotide sequence ID" value="NC_021490.2"/>
</dbReference>
<dbReference type="SMR" id="O83085"/>
<dbReference type="IntAct" id="O83085">
    <property type="interactions" value="6"/>
</dbReference>
<dbReference type="STRING" id="243276.TP_0045"/>
<dbReference type="EnsemblBacteria" id="AAC65039">
    <property type="protein sequence ID" value="AAC65039"/>
    <property type="gene ID" value="TP_0045"/>
</dbReference>
<dbReference type="GeneID" id="93875841"/>
<dbReference type="KEGG" id="tpa:TP_0045"/>
<dbReference type="KEGG" id="tpw:TPANIC_0045"/>
<dbReference type="PATRIC" id="fig|243276.5.peg.48"/>
<dbReference type="eggNOG" id="COG1816">
    <property type="taxonomic scope" value="Bacteria"/>
</dbReference>
<dbReference type="HOGENOM" id="CLU_039228_2_0_12"/>
<dbReference type="OrthoDB" id="9779574at2"/>
<dbReference type="Proteomes" id="UP000000811">
    <property type="component" value="Chromosome"/>
</dbReference>
<dbReference type="GO" id="GO:0019239">
    <property type="term" value="F:deaminase activity"/>
    <property type="evidence" value="ECO:0007669"/>
    <property type="project" value="InterPro"/>
</dbReference>
<dbReference type="GO" id="GO:0016814">
    <property type="term" value="F:hydrolase activity, acting on carbon-nitrogen (but not peptide) bonds, in cyclic amidines"/>
    <property type="evidence" value="ECO:0007669"/>
    <property type="project" value="UniProtKB-ARBA"/>
</dbReference>
<dbReference type="GO" id="GO:0046872">
    <property type="term" value="F:metal ion binding"/>
    <property type="evidence" value="ECO:0007669"/>
    <property type="project" value="UniProtKB-KW"/>
</dbReference>
<dbReference type="GO" id="GO:0009117">
    <property type="term" value="P:nucleotide metabolic process"/>
    <property type="evidence" value="ECO:0007669"/>
    <property type="project" value="UniProtKB-KW"/>
</dbReference>
<dbReference type="Gene3D" id="3.20.20.140">
    <property type="entry name" value="Metal-dependent hydrolases"/>
    <property type="match status" value="1"/>
</dbReference>
<dbReference type="InterPro" id="IPR001365">
    <property type="entry name" value="A_deaminase_dom"/>
</dbReference>
<dbReference type="InterPro" id="IPR006330">
    <property type="entry name" value="Ado/ade_deaminase"/>
</dbReference>
<dbReference type="InterPro" id="IPR032466">
    <property type="entry name" value="Metal_Hydrolase"/>
</dbReference>
<dbReference type="NCBIfam" id="NF006859">
    <property type="entry name" value="PRK09358.3-6"/>
    <property type="match status" value="1"/>
</dbReference>
<dbReference type="PANTHER" id="PTHR43114">
    <property type="entry name" value="ADENINE DEAMINASE"/>
    <property type="match status" value="1"/>
</dbReference>
<dbReference type="PANTHER" id="PTHR43114:SF6">
    <property type="entry name" value="ADENINE DEAMINASE"/>
    <property type="match status" value="1"/>
</dbReference>
<dbReference type="Pfam" id="PF00962">
    <property type="entry name" value="A_deaminase"/>
    <property type="match status" value="1"/>
</dbReference>
<dbReference type="SUPFAM" id="SSF51556">
    <property type="entry name" value="Metallo-dependent hydrolases"/>
    <property type="match status" value="1"/>
</dbReference>
<sequence length="299" mass="34543">MKSLEYYRSQPKADVHTHLNLSMKYERYKQWSGVVIPNFPRKMRGLDEMHEIIGEYTRPQCKTAQDVLNLFTMSIEDAIADNVVVMETSVDIGFITHYEENLDHFLCDLSDLHRRYKRNVTLHFELGISKIRERSFVEQWAEPMMRSGIFENIDLYGPEISEGIEDFIYIFKLAEKYHLKKKAHVGEFSDAQSVRHFVEIFNLDEVQHGIGAATDENVLRFLAERKVRCNVCPTSNVMLNAVECLEKHPIKKMMDAGVRVGLGTDDLLFFGKTNSEQLFDMVSCGLITELHAEALLAVR</sequence>
<keyword id="KW-0378">Hydrolase</keyword>
<keyword id="KW-0479">Metal-binding</keyword>
<keyword id="KW-0546">Nucleotide metabolism</keyword>
<keyword id="KW-1185">Reference proteome</keyword>
<keyword id="KW-0862">Zinc</keyword>
<evidence type="ECO:0000250" key="1"/>
<evidence type="ECO:0000250" key="2">
    <source>
        <dbReference type="UniProtKB" id="Q9I6Y4"/>
    </source>
</evidence>
<evidence type="ECO:0000305" key="3"/>
<evidence type="ECO:0000312" key="4">
    <source>
        <dbReference type="EMBL" id="AGN75265.1"/>
    </source>
</evidence>
<organism>
    <name type="scientific">Treponema pallidum (strain Nichols)</name>
    <dbReference type="NCBI Taxonomy" id="243276"/>
    <lineage>
        <taxon>Bacteria</taxon>
        <taxon>Pseudomonadati</taxon>
        <taxon>Spirochaetota</taxon>
        <taxon>Spirochaetia</taxon>
        <taxon>Spirochaetales</taxon>
        <taxon>Treponemataceae</taxon>
        <taxon>Treponema</taxon>
    </lineage>
</organism>
<gene>
    <name evidence="4" type="primary">add</name>
    <name type="ordered locus">TP_0045</name>
    <name evidence="4" type="ORF">TPANIC_0045</name>
</gene>
<proteinExistence type="inferred from homology"/>
<accession>O83085</accession>
<accession>R9UUU2</accession>
<reference key="1">
    <citation type="journal article" date="1998" name="Science">
        <title>Complete genome sequence of Treponema pallidum, the syphilis spirochete.</title>
        <authorList>
            <person name="Fraser C.M."/>
            <person name="Norris S.J."/>
            <person name="Weinstock G.M."/>
            <person name="White O."/>
            <person name="Sutton G.G."/>
            <person name="Dodson R.J."/>
            <person name="Gwinn M.L."/>
            <person name="Hickey E.K."/>
            <person name="Clayton R.A."/>
            <person name="Ketchum K.A."/>
            <person name="Sodergren E."/>
            <person name="Hardham J.M."/>
            <person name="McLeod M.P."/>
            <person name="Salzberg S.L."/>
            <person name="Peterson J.D."/>
            <person name="Khalak H.G."/>
            <person name="Richardson D.L."/>
            <person name="Howell J.K."/>
            <person name="Chidambaram M."/>
            <person name="Utterback T.R."/>
            <person name="McDonald L.A."/>
            <person name="Artiach P."/>
            <person name="Bowman C."/>
            <person name="Cotton M.D."/>
            <person name="Fujii C."/>
            <person name="Garland S.A."/>
            <person name="Hatch B."/>
            <person name="Horst K."/>
            <person name="Roberts K.M."/>
            <person name="Sandusky M."/>
            <person name="Weidman J.F."/>
            <person name="Smith H.O."/>
            <person name="Venter J.C."/>
        </authorList>
    </citation>
    <scope>NUCLEOTIDE SEQUENCE [LARGE SCALE GENOMIC DNA]</scope>
    <source>
        <strain>Nichols</strain>
    </source>
</reference>
<reference key="2">
    <citation type="journal article" date="2013" name="PLoS ONE">
        <title>Resequencing of Treponema pallidum ssp. pallidum strains Nichols and SS14: correction of sequencing errors resulted in increased separation of syphilis treponeme subclusters.</title>
        <authorList>
            <person name="Petrosova H."/>
            <person name="Pospisilova P."/>
            <person name="Strouhal M."/>
            <person name="Cejkova D."/>
            <person name="Zobanikova M."/>
            <person name="Mikalova L."/>
            <person name="Sodergren E."/>
            <person name="Weinstock G.M."/>
            <person name="Smajs D."/>
        </authorList>
    </citation>
    <scope>NUCLEOTIDE SEQUENCE [LARGE SCALE GENOMIC DNA]</scope>
    <source>
        <strain>Nichols</strain>
    </source>
</reference>
<name>ADDL_TREPA</name>
<comment type="function">
    <text evidence="3">Putative nucleoside deaminase. May catalyze the hydrolytic deamination of adenosine or some similar substrate and play a role in purine metabolism.</text>
</comment>
<comment type="cofactor">
    <cofactor evidence="2">
        <name>Zn(2+)</name>
        <dbReference type="ChEBI" id="CHEBI:29105"/>
    </cofactor>
    <text evidence="2">Binds 1 zinc ion per subunit.</text>
</comment>
<comment type="similarity">
    <text evidence="3">Belongs to the metallo-dependent hydrolases superfamily. Adenosine and AMP deaminases family.</text>
</comment>
<protein>
    <recommendedName>
        <fullName>Putative adenosine/adenine deaminase</fullName>
        <ecNumber>3.5.4.-</ecNumber>
    </recommendedName>
    <alternativeName>
        <fullName>Adenosine aminohydrolase</fullName>
    </alternativeName>
</protein>
<feature type="chain" id="PRO_0000194396" description="Putative adenosine/adenine deaminase">
    <location>
        <begin position="1"/>
        <end position="299"/>
    </location>
</feature>
<feature type="active site" description="Proton donor" evidence="1">
    <location>
        <position position="187"/>
    </location>
</feature>
<feature type="binding site" evidence="2">
    <location>
        <position position="16"/>
    </location>
    <ligand>
        <name>Zn(2+)</name>
        <dbReference type="ChEBI" id="CHEBI:29105"/>
        <note>catalytic</note>
    </ligand>
</feature>
<feature type="binding site" evidence="1">
    <location>
        <position position="18"/>
    </location>
    <ligand>
        <name>substrate</name>
    </ligand>
</feature>
<feature type="binding site" evidence="2">
    <location>
        <position position="18"/>
    </location>
    <ligand>
        <name>Zn(2+)</name>
        <dbReference type="ChEBI" id="CHEBI:29105"/>
        <note>catalytic</note>
    </ligand>
</feature>
<feature type="binding site" evidence="1">
    <location>
        <position position="157"/>
    </location>
    <ligand>
        <name>substrate</name>
    </ligand>
</feature>
<feature type="binding site" evidence="2">
    <location>
        <position position="184"/>
    </location>
    <ligand>
        <name>Zn(2+)</name>
        <dbReference type="ChEBI" id="CHEBI:29105"/>
        <note>catalytic</note>
    </ligand>
</feature>
<feature type="binding site" evidence="2">
    <location>
        <position position="265"/>
    </location>
    <ligand>
        <name>Zn(2+)</name>
        <dbReference type="ChEBI" id="CHEBI:29105"/>
        <note>catalytic</note>
    </ligand>
</feature>
<feature type="binding site" evidence="1">
    <location>
        <position position="266"/>
    </location>
    <ligand>
        <name>substrate</name>
    </ligand>
</feature>
<feature type="site" description="Important for catalytic activity" evidence="1">
    <location>
        <position position="208"/>
    </location>
</feature>